<organism>
    <name type="scientific">Mycobacterium sp. (strain KMS)</name>
    <dbReference type="NCBI Taxonomy" id="189918"/>
    <lineage>
        <taxon>Bacteria</taxon>
        <taxon>Bacillati</taxon>
        <taxon>Actinomycetota</taxon>
        <taxon>Actinomycetes</taxon>
        <taxon>Mycobacteriales</taxon>
        <taxon>Mycobacteriaceae</taxon>
        <taxon>Mycobacterium</taxon>
    </lineage>
</organism>
<gene>
    <name evidence="1" type="primary">rplC</name>
    <name type="ordered locus">Mkms_1030</name>
</gene>
<accession>A1UBN6</accession>
<protein>
    <recommendedName>
        <fullName evidence="1">Large ribosomal subunit protein uL3</fullName>
    </recommendedName>
    <alternativeName>
        <fullName evidence="2">50S ribosomal protein L3</fullName>
    </alternativeName>
</protein>
<reference key="1">
    <citation type="submission" date="2006-12" db="EMBL/GenBank/DDBJ databases">
        <title>Complete sequence of chromosome of Mycobacterium sp. KMS.</title>
        <authorList>
            <consortium name="US DOE Joint Genome Institute"/>
            <person name="Copeland A."/>
            <person name="Lucas S."/>
            <person name="Lapidus A."/>
            <person name="Barry K."/>
            <person name="Detter J.C."/>
            <person name="Glavina del Rio T."/>
            <person name="Hammon N."/>
            <person name="Israni S."/>
            <person name="Dalin E."/>
            <person name="Tice H."/>
            <person name="Pitluck S."/>
            <person name="Kiss H."/>
            <person name="Brettin T."/>
            <person name="Bruce D."/>
            <person name="Han C."/>
            <person name="Tapia R."/>
            <person name="Gilna P."/>
            <person name="Schmutz J."/>
            <person name="Larimer F."/>
            <person name="Land M."/>
            <person name="Hauser L."/>
            <person name="Kyrpides N."/>
            <person name="Mikhailova N."/>
            <person name="Miller C.D."/>
            <person name="Richardson P."/>
        </authorList>
    </citation>
    <scope>NUCLEOTIDE SEQUENCE [LARGE SCALE GENOMIC DNA]</scope>
    <source>
        <strain>KMS</strain>
    </source>
</reference>
<dbReference type="EMBL" id="CP000518">
    <property type="protein sequence ID" value="ABL90244.1"/>
    <property type="molecule type" value="Genomic_DNA"/>
</dbReference>
<dbReference type="SMR" id="A1UBN6"/>
<dbReference type="STRING" id="189918.Mkms_1030"/>
<dbReference type="KEGG" id="mkm:Mkms_1030"/>
<dbReference type="HOGENOM" id="CLU_044142_4_1_11"/>
<dbReference type="OrthoDB" id="9806135at2"/>
<dbReference type="GO" id="GO:0022625">
    <property type="term" value="C:cytosolic large ribosomal subunit"/>
    <property type="evidence" value="ECO:0007669"/>
    <property type="project" value="TreeGrafter"/>
</dbReference>
<dbReference type="GO" id="GO:0019843">
    <property type="term" value="F:rRNA binding"/>
    <property type="evidence" value="ECO:0007669"/>
    <property type="project" value="UniProtKB-UniRule"/>
</dbReference>
<dbReference type="GO" id="GO:0003735">
    <property type="term" value="F:structural constituent of ribosome"/>
    <property type="evidence" value="ECO:0007669"/>
    <property type="project" value="InterPro"/>
</dbReference>
<dbReference type="GO" id="GO:0006412">
    <property type="term" value="P:translation"/>
    <property type="evidence" value="ECO:0007669"/>
    <property type="project" value="UniProtKB-UniRule"/>
</dbReference>
<dbReference type="FunFam" id="2.40.30.10:FF:000004">
    <property type="entry name" value="50S ribosomal protein L3"/>
    <property type="match status" value="1"/>
</dbReference>
<dbReference type="FunFam" id="3.30.160.810:FF:000001">
    <property type="entry name" value="50S ribosomal protein L3"/>
    <property type="match status" value="1"/>
</dbReference>
<dbReference type="Gene3D" id="3.30.160.810">
    <property type="match status" value="1"/>
</dbReference>
<dbReference type="Gene3D" id="2.40.30.10">
    <property type="entry name" value="Translation factors"/>
    <property type="match status" value="1"/>
</dbReference>
<dbReference type="HAMAP" id="MF_01325_B">
    <property type="entry name" value="Ribosomal_uL3_B"/>
    <property type="match status" value="1"/>
</dbReference>
<dbReference type="InterPro" id="IPR000597">
    <property type="entry name" value="Ribosomal_uL3"/>
</dbReference>
<dbReference type="InterPro" id="IPR019927">
    <property type="entry name" value="Ribosomal_uL3_bac/org-type"/>
</dbReference>
<dbReference type="InterPro" id="IPR019926">
    <property type="entry name" value="Ribosomal_uL3_CS"/>
</dbReference>
<dbReference type="InterPro" id="IPR009000">
    <property type="entry name" value="Transl_B-barrel_sf"/>
</dbReference>
<dbReference type="NCBIfam" id="TIGR03625">
    <property type="entry name" value="L3_bact"/>
    <property type="match status" value="1"/>
</dbReference>
<dbReference type="PANTHER" id="PTHR11229">
    <property type="entry name" value="50S RIBOSOMAL PROTEIN L3"/>
    <property type="match status" value="1"/>
</dbReference>
<dbReference type="PANTHER" id="PTHR11229:SF16">
    <property type="entry name" value="LARGE RIBOSOMAL SUBUNIT PROTEIN UL3C"/>
    <property type="match status" value="1"/>
</dbReference>
<dbReference type="Pfam" id="PF00297">
    <property type="entry name" value="Ribosomal_L3"/>
    <property type="match status" value="1"/>
</dbReference>
<dbReference type="SUPFAM" id="SSF50447">
    <property type="entry name" value="Translation proteins"/>
    <property type="match status" value="1"/>
</dbReference>
<dbReference type="PROSITE" id="PS00474">
    <property type="entry name" value="RIBOSOMAL_L3"/>
    <property type="match status" value="1"/>
</dbReference>
<sequence>MARKGILGTKLGMTQVFDENNKVVPVTVVKAGPNVVTRIRTPERDGYSAVQIAYGEISPRKVNKPVTGQFAAAGVNPRRHLAELRLDDESAAADYEVGQELTAEVFSDGAYVDVTGTSKGKGFAGTMKRHGFKGQGAAHGAQAVHRRPGSIGGCATPGRVFKGTRMSGRMGSDRVTTQNLVVHKVDAANGVLLIKGAIPGRNGGLVMVRSAIKRGEK</sequence>
<feature type="chain" id="PRO_1000052090" description="Large ribosomal subunit protein uL3">
    <location>
        <begin position="1"/>
        <end position="217"/>
    </location>
</feature>
<comment type="function">
    <text evidence="1">One of the primary rRNA binding proteins, it binds directly near the 3'-end of the 23S rRNA, where it nucleates assembly of the 50S subunit.</text>
</comment>
<comment type="subunit">
    <text evidence="1">Part of the 50S ribosomal subunit. Forms a cluster with proteins L14 and L19.</text>
</comment>
<comment type="similarity">
    <text evidence="1">Belongs to the universal ribosomal protein uL3 family.</text>
</comment>
<name>RL3_MYCSK</name>
<proteinExistence type="inferred from homology"/>
<evidence type="ECO:0000255" key="1">
    <source>
        <dbReference type="HAMAP-Rule" id="MF_01325"/>
    </source>
</evidence>
<evidence type="ECO:0000305" key="2"/>
<keyword id="KW-0687">Ribonucleoprotein</keyword>
<keyword id="KW-0689">Ribosomal protein</keyword>
<keyword id="KW-0694">RNA-binding</keyword>
<keyword id="KW-0699">rRNA-binding</keyword>